<accession>Q9ATN4</accession>
<dbReference type="EMBL" id="AF326483">
    <property type="protein sequence ID" value="AAK26750.1"/>
    <property type="molecule type" value="mRNA"/>
</dbReference>
<dbReference type="RefSeq" id="NP_001105721.1">
    <property type="nucleotide sequence ID" value="NM_001112251.1"/>
</dbReference>
<dbReference type="SMR" id="Q9ATN4"/>
<dbReference type="FunCoup" id="Q9ATN4">
    <property type="interactions" value="23"/>
</dbReference>
<dbReference type="STRING" id="4577.Q9ATN4"/>
<dbReference type="PaxDb" id="4577-GRMZM2G041980_P02"/>
<dbReference type="EnsemblPlants" id="Zm00001eb239170_T002">
    <property type="protein sequence ID" value="Zm00001eb239170_P002"/>
    <property type="gene ID" value="Zm00001eb239170"/>
</dbReference>
<dbReference type="GeneID" id="542741"/>
<dbReference type="Gramene" id="Zm00001eb239170_T002">
    <property type="protein sequence ID" value="Zm00001eb239170_P002"/>
    <property type="gene ID" value="Zm00001eb239170"/>
</dbReference>
<dbReference type="KEGG" id="zma:542741"/>
<dbReference type="eggNOG" id="KOG0223">
    <property type="taxonomic scope" value="Eukaryota"/>
</dbReference>
<dbReference type="InParanoid" id="Q9ATN4"/>
<dbReference type="OMA" id="FTSHHYY"/>
<dbReference type="OrthoDB" id="3222at2759"/>
<dbReference type="Proteomes" id="UP000007305">
    <property type="component" value="Chromosome 5"/>
</dbReference>
<dbReference type="ExpressionAtlas" id="Q9ATN4">
    <property type="expression patterns" value="baseline and differential"/>
</dbReference>
<dbReference type="GO" id="GO:0016020">
    <property type="term" value="C:membrane"/>
    <property type="evidence" value="ECO:0000304"/>
    <property type="project" value="AgBase"/>
</dbReference>
<dbReference type="GO" id="GO:0015267">
    <property type="term" value="F:channel activity"/>
    <property type="evidence" value="ECO:0007669"/>
    <property type="project" value="InterPro"/>
</dbReference>
<dbReference type="CDD" id="cd00333">
    <property type="entry name" value="MIP"/>
    <property type="match status" value="1"/>
</dbReference>
<dbReference type="FunFam" id="1.20.1080.10:FF:000029">
    <property type="entry name" value="Aquaporin NIP1-1"/>
    <property type="match status" value="1"/>
</dbReference>
<dbReference type="Gene3D" id="1.20.1080.10">
    <property type="entry name" value="Glycerol uptake facilitator protein"/>
    <property type="match status" value="1"/>
</dbReference>
<dbReference type="InterPro" id="IPR023271">
    <property type="entry name" value="Aquaporin-like"/>
</dbReference>
<dbReference type="InterPro" id="IPR034294">
    <property type="entry name" value="Aquaporin_transptr"/>
</dbReference>
<dbReference type="InterPro" id="IPR000425">
    <property type="entry name" value="MIP"/>
</dbReference>
<dbReference type="InterPro" id="IPR022357">
    <property type="entry name" value="MIP_CS"/>
</dbReference>
<dbReference type="NCBIfam" id="TIGR00861">
    <property type="entry name" value="MIP"/>
    <property type="match status" value="1"/>
</dbReference>
<dbReference type="PANTHER" id="PTHR45724:SF13">
    <property type="entry name" value="AQUAPORIN NIP1-1-RELATED"/>
    <property type="match status" value="1"/>
</dbReference>
<dbReference type="PANTHER" id="PTHR45724">
    <property type="entry name" value="AQUAPORIN NIP2-1"/>
    <property type="match status" value="1"/>
</dbReference>
<dbReference type="Pfam" id="PF00230">
    <property type="entry name" value="MIP"/>
    <property type="match status" value="1"/>
</dbReference>
<dbReference type="PRINTS" id="PR00783">
    <property type="entry name" value="MINTRINSICP"/>
</dbReference>
<dbReference type="SUPFAM" id="SSF81338">
    <property type="entry name" value="Aquaporin-like"/>
    <property type="match status" value="1"/>
</dbReference>
<dbReference type="PROSITE" id="PS00221">
    <property type="entry name" value="MIP"/>
    <property type="match status" value="1"/>
</dbReference>
<protein>
    <recommendedName>
        <fullName>Aquaporin NIP1-1</fullName>
    </recommendedName>
    <alternativeName>
        <fullName>NOD26-like intrinsic protein 1-1</fullName>
    </alternativeName>
    <alternativeName>
        <fullName>ZmNIP1-1</fullName>
    </alternativeName>
    <alternativeName>
        <fullName>ZmNIP1;1</fullName>
    </alternativeName>
</protein>
<reference key="1">
    <citation type="journal article" date="2001" name="Plant Physiol.">
        <title>Aquaporins constitute a large and highly divergent protein family in maize.</title>
        <authorList>
            <person name="Chaumont F."/>
            <person name="Barrieu F."/>
            <person name="Wojcik E."/>
            <person name="Chrispeels M.J."/>
            <person name="Jung R."/>
        </authorList>
    </citation>
    <scope>NUCLEOTIDE SEQUENCE [MRNA]</scope>
    <scope>GENE FAMILY</scope>
    <scope>NOMENCLATURE</scope>
    <source>
        <strain>cv. B73</strain>
    </source>
</reference>
<proteinExistence type="evidence at transcript level"/>
<evidence type="ECO:0000250" key="1"/>
<evidence type="ECO:0000255" key="2"/>
<evidence type="ECO:0000305" key="3"/>
<gene>
    <name type="primary">NIP1-1</name>
</gene>
<comment type="function">
    <text evidence="1">Aquaporins facilitate the transport of water and small neutral solutes across cell membranes.</text>
</comment>
<comment type="subcellular location">
    <subcellularLocation>
        <location evidence="3">Membrane</location>
        <topology evidence="3">Multi-pass membrane protein</topology>
    </subcellularLocation>
</comment>
<comment type="domain">
    <text>Aquaporins contain two tandem repeats each containing three membrane-spanning domains and a pore-forming loop with the signature motif Asn-Pro-Ala (NPA).</text>
</comment>
<comment type="similarity">
    <text evidence="3">Belongs to the MIP/aquaporin (TC 1.A.8) family. NIP (TC 1.A.8.12) subfamily.</text>
</comment>
<feature type="chain" id="PRO_0000286025" description="Aquaporin NIP1-1">
    <location>
        <begin position="1"/>
        <end position="282"/>
    </location>
</feature>
<feature type="transmembrane region" description="Helical; Name=1" evidence="2">
    <location>
        <begin position="46"/>
        <end position="66"/>
    </location>
</feature>
<feature type="transmembrane region" description="Helical; Name=2" evidence="2">
    <location>
        <begin position="74"/>
        <end position="94"/>
    </location>
</feature>
<feature type="transmembrane region" description="Helical; Name=3" evidence="2">
    <location>
        <begin position="125"/>
        <end position="145"/>
    </location>
</feature>
<feature type="transmembrane region" description="Helical; Name=4" evidence="2">
    <location>
        <begin position="162"/>
        <end position="182"/>
    </location>
</feature>
<feature type="transmembrane region" description="Helical; Name=5" evidence="2">
    <location>
        <begin position="186"/>
        <end position="206"/>
    </location>
</feature>
<feature type="transmembrane region" description="Helical; Name=6" evidence="2">
    <location>
        <begin position="232"/>
        <end position="252"/>
    </location>
</feature>
<feature type="short sequence motif" description="NPA 1" evidence="1">
    <location>
        <begin position="103"/>
        <end position="105"/>
    </location>
</feature>
<feature type="short sequence motif" description="NPA 2" evidence="1">
    <location>
        <begin position="215"/>
        <end position="217"/>
    </location>
</feature>
<keyword id="KW-0472">Membrane</keyword>
<keyword id="KW-1185">Reference proteome</keyword>
<keyword id="KW-0677">Repeat</keyword>
<keyword id="KW-0812">Transmembrane</keyword>
<keyword id="KW-1133">Transmembrane helix</keyword>
<keyword id="KW-0813">Transport</keyword>
<sequence length="282" mass="29559">MAGGGDHSQTNGGHVDQRALEEGRKEEFADQGCAAMVVSVPFIQKIIAEIFGTYFLMFAGCGAVTINASKNGQITFPGVAIVWGLAVMVMVYAVGHISGAHFNPAVTLAFATSGRFPWRQLPAYVLAQMLGATLASGTLRLMFGGRHEHFPGTLPTGSEVQSLVIEIITTFYLMFVISGVATDNRAIGELAGLAVGATILLNVLIAGPVSGASMNPARSVGPALVSGEYTSIWVYVVGPVVGAVAGAWAYNLIRFTNKPLREITKSTSFLKSTSRMNSAASA</sequence>
<organism>
    <name type="scientific">Zea mays</name>
    <name type="common">Maize</name>
    <dbReference type="NCBI Taxonomy" id="4577"/>
    <lineage>
        <taxon>Eukaryota</taxon>
        <taxon>Viridiplantae</taxon>
        <taxon>Streptophyta</taxon>
        <taxon>Embryophyta</taxon>
        <taxon>Tracheophyta</taxon>
        <taxon>Spermatophyta</taxon>
        <taxon>Magnoliopsida</taxon>
        <taxon>Liliopsida</taxon>
        <taxon>Poales</taxon>
        <taxon>Poaceae</taxon>
        <taxon>PACMAD clade</taxon>
        <taxon>Panicoideae</taxon>
        <taxon>Andropogonodae</taxon>
        <taxon>Andropogoneae</taxon>
        <taxon>Tripsacinae</taxon>
        <taxon>Zea</taxon>
    </lineage>
</organism>
<name>NIP11_MAIZE</name>